<name>CAPSD_TTVVG</name>
<comment type="function">
    <text>May self assemble to form an icosahedral capsid. Presumably essential to initiate and monitor viral genome replication by a rolling circle mechanism.</text>
</comment>
<comment type="subcellular location">
    <subcellularLocation>
        <location evidence="2">Virion</location>
    </subcellularLocation>
</comment>
<comment type="similarity">
    <text evidence="2">Belongs to the anelloviridae capsid protein family.</text>
</comment>
<evidence type="ECO:0000256" key="1">
    <source>
        <dbReference type="SAM" id="MobiDB-lite"/>
    </source>
</evidence>
<evidence type="ECO:0000305" key="2"/>
<dbReference type="EMBL" id="AF122913">
    <property type="protein sequence ID" value="AAD24198.1"/>
    <property type="molecule type" value="Genomic_DNA"/>
</dbReference>
<dbReference type="SMR" id="Q9WGZ0"/>
<dbReference type="Proteomes" id="UP000007550">
    <property type="component" value="Genome"/>
</dbReference>
<dbReference type="GO" id="GO:0039615">
    <property type="term" value="C:T=1 icosahedral viral capsid"/>
    <property type="evidence" value="ECO:0007669"/>
    <property type="project" value="UniProtKB-KW"/>
</dbReference>
<dbReference type="GO" id="GO:0006260">
    <property type="term" value="P:DNA replication"/>
    <property type="evidence" value="ECO:0007669"/>
    <property type="project" value="UniProtKB-KW"/>
</dbReference>
<dbReference type="InterPro" id="IPR004219">
    <property type="entry name" value="TTvirus_Unk"/>
</dbReference>
<dbReference type="Pfam" id="PF02956">
    <property type="entry name" value="TT_ORF1"/>
    <property type="match status" value="1"/>
</dbReference>
<organismHost>
    <name type="scientific">Homo sapiens</name>
    <name type="common">Human</name>
    <dbReference type="NCBI Taxonomy" id="9606"/>
</organismHost>
<keyword id="KW-0167">Capsid protein</keyword>
<keyword id="KW-0235">DNA replication</keyword>
<keyword id="KW-1185">Reference proteome</keyword>
<keyword id="KW-1140">T=1 icosahedral capsid protein</keyword>
<keyword id="KW-0946">Virion</keyword>
<proteinExistence type="inferred from homology"/>
<gene>
    <name type="ORF">ORF1</name>
</gene>
<accession>Q9WGZ0</accession>
<protein>
    <recommendedName>
        <fullName>Probable capsid and replication-associated protein</fullName>
    </recommendedName>
</protein>
<reference key="1">
    <citation type="journal article" date="1999" name="Proc. Natl. Acad. Sci. U.S.A.">
        <title>Molecular and biophysical characterization of TT virus: evidence for a new virus family infecting humans.</title>
        <authorList>
            <person name="Mushahwar I.K."/>
            <person name="Erker J.C."/>
            <person name="Muerhoff A.S."/>
            <person name="Leary T.P."/>
            <person name="Simons J.N."/>
            <person name="Birkenmeyer L.G."/>
            <person name="Chalmers M.L."/>
            <person name="Pilot-Matias T.J."/>
            <person name="Dexai S.M."/>
        </authorList>
    </citation>
    <scope>NUCLEOTIDE SEQUENCE [GENOMIC DNA]</scope>
</reference>
<reference key="2">
    <citation type="journal article" date="2007" name="Rev. Med. Virol.">
        <title>Torque teno virus (TTV): current status.</title>
        <authorList>
            <person name="Hino S."/>
            <person name="Miyata H."/>
        </authorList>
    </citation>
    <scope>REVIEW</scope>
</reference>
<sequence length="770" mass="89872">MAYGWWRRRRRRWRRWRRRPWRRRWRTRRRRPARRRGRRRNVRRRRRGGRWRRRYRRWKRKGRRRKKAKIIIRQWQPNYRRRCNIVGYIPVLICGENTVSRNYATHSDDTNYPGPFGGGMTTDKFTLRILYGEYKRFMNYWTASNEDLDLCRYLGVNLYFFRHPDVDFIIKINTMPPFLDTELTAPSIHPGMLALDKRARWIPSLKSRPGKKHYIKIRVGAPKMFTDKWYPQTDLCDMVLLTVYATAADMQYPFGSPLTDSVVVNFQVLQSMYDEKISILPDEKIQRQNLLTSISNYIPFYNTTQTIAQLKPFVDAGNAISGTTTTTWGSLLNTTKFTTTTTTTYTYPGTTNTTVTFITANDSWYRGTVYNQNIKDVAKKAAELYSKATKAVLGNTFTTEDYTLGYHGGLYSSIWLSPGRSYFETPGAYTDIKYNPFTDRGEGNMLWIDWLSKKNMNYDKVQSKCLISDLPLWAAAYGYVEFCAKSTGDQNIHMNARLLIRSPFTDPQLLVHTDPTKGFVPYSLNFGNGKMPGGSSNVPIRMRAKWYPTLLHQQEVLEALAQSGPFAYHADIKKVSLGMKYRFKWIWGGNPVRQQVVRNPCKETHSSGNRVPRSLQIVDPKYNSPELTFHTWDFKRGLFGPKAIQRMQQQPTTTDIFSAGRKRPRRDTEVYHSSQEGEQKESLLFPPVKLLRRVPPWEDSQQEESGSQSSEEETQTVSQQLKQQLQQQRILGVKLRLLFNQVQKIQQNQDINPTLLPRGGDLASLFQIAP</sequence>
<feature type="chain" id="PRO_0000317471" description="Probable capsid and replication-associated protein">
    <location>
        <begin position="1"/>
        <end position="770"/>
    </location>
</feature>
<feature type="region of interest" description="Disordered" evidence="1">
    <location>
        <begin position="645"/>
        <end position="682"/>
    </location>
</feature>
<feature type="region of interest" description="Disordered" evidence="1">
    <location>
        <begin position="697"/>
        <end position="717"/>
    </location>
</feature>
<feature type="compositionally biased region" description="Polar residues" evidence="1">
    <location>
        <begin position="646"/>
        <end position="656"/>
    </location>
</feature>
<feature type="compositionally biased region" description="Basic and acidic residues" evidence="1">
    <location>
        <begin position="666"/>
        <end position="681"/>
    </location>
</feature>
<feature type="compositionally biased region" description="Low complexity" evidence="1">
    <location>
        <begin position="703"/>
        <end position="717"/>
    </location>
</feature>
<organism>
    <name type="scientific">Torque teno virus (isolate Human/Ghana/GH1/1996)</name>
    <name type="common">TTV</name>
    <dbReference type="NCBI Taxonomy" id="487067"/>
    <lineage>
        <taxon>Viruses</taxon>
        <taxon>Viruses incertae sedis</taxon>
        <taxon>Anelloviridae</taxon>
        <taxon>Torque teno virus</taxon>
    </lineage>
</organism>